<proteinExistence type="evidence at protein level"/>
<evidence type="ECO:0000255" key="1"/>
<evidence type="ECO:0000255" key="2">
    <source>
        <dbReference type="PROSITE-ProRule" id="PRU00258"/>
    </source>
</evidence>
<evidence type="ECO:0000269" key="3">
    <source>
    </source>
</evidence>
<evidence type="ECO:0000269" key="4">
    <source>
    </source>
</evidence>
<evidence type="ECO:0000269" key="5">
    <source>
    </source>
</evidence>
<evidence type="ECO:0000303" key="6">
    <source>
    </source>
</evidence>
<evidence type="ECO:0000303" key="7">
    <source>
    </source>
</evidence>
<evidence type="ECO:0000305" key="8"/>
<evidence type="ECO:0000305" key="9">
    <source>
    </source>
</evidence>
<evidence type="ECO:0000305" key="10">
    <source>
    </source>
</evidence>
<evidence type="ECO:0000305" key="11">
    <source>
    </source>
</evidence>
<feature type="chain" id="PRO_0000450544" description="Nonribosomal peptide synthetase btyA">
    <location>
        <begin position="1"/>
        <end position="930"/>
    </location>
</feature>
<feature type="domain" description="Carrier" evidence="2 9 10 11">
    <location>
        <begin position="570"/>
        <end position="647"/>
    </location>
</feature>
<feature type="region of interest" description="Adenylation (A) domain" evidence="1 9 10 11">
    <location>
        <begin position="31"/>
        <end position="440"/>
    </location>
</feature>
<feature type="region of interest" description="Thioesterase (TE) domain" evidence="1 9 10 11">
    <location>
        <begin position="667"/>
        <end position="920"/>
    </location>
</feature>
<feature type="modified residue" description="O-(pantetheine 4'-phosphoryl)serine" evidence="2">
    <location>
        <position position="607"/>
    </location>
</feature>
<accession>Q0CU19</accession>
<accession>A0A2I6SS16</accession>
<comment type="function">
    <text evidence="3 4 5 9 10">Nonribosomal peptide synthetase; part of the gene cluster that mediates the biosynthesis of butyrolactones, natural products that show a wide range of biological activities such as antitumor, antiparasitic or anti-inflammatory activity (PubMed:23841722, PubMed:27978657, PubMed:29305695). The nonribosomal peptide synthetase btyA is responsible for the production of butyrolactone II, the core structure of butyrolactones (PubMed:27978657, PubMed:29305695). BtyA first activates 4-hydroxyphenylpyruvate (HPPA) through its A domain to AMP-HPPA (Probable). The HPPA unit is then loaded to the T domain and eventually transferred to the TE domain (Probable). Upon loading of another HPPA unit to the T domain, the TE domain promotes the enolate formation on the unit attached (Probable). Then aldol condensation establishes the carbon-carbon bond between the two units, followed by ester cyclization, and keto-enol tautomerization to yield the gamma-butyrolactone core (Probable). Hydrolysis, and finally esterification of the exposed carboxylic acid group yields butyrolactone II (Probable). Two additional enzymes, a prenyltransferase and an epoxidase, may be involved in the tailoring modifications of butyrolactone II to give butyrolactone III and butyrolactone I (Probable).</text>
</comment>
<comment type="catalytic activity">
    <reaction evidence="5">
        <text>2 3-(4-hydroxyphenyl)pyruvate + H(+) = (2S)-2-(4-hydoxybenzyl)-3-(4-hydroxyphenyl)-2-furonol carboxylate + H2O</text>
        <dbReference type="Rhea" id="RHEA:63900"/>
        <dbReference type="ChEBI" id="CHEBI:15377"/>
        <dbReference type="ChEBI" id="CHEBI:15378"/>
        <dbReference type="ChEBI" id="CHEBI:36242"/>
        <dbReference type="ChEBI" id="CHEBI:149630"/>
    </reaction>
    <physiologicalReaction direction="left-to-right" evidence="5">
        <dbReference type="Rhea" id="RHEA:63901"/>
    </physiologicalReaction>
</comment>
<comment type="pathway">
    <text evidence="3 4 5">Secondary metabolite biosynthesis.</text>
</comment>
<comment type="domain">
    <text evidence="9 10 11">BtyA has an A-T-TE domain architecture (Probable). The adenylation (A) domain recognizes and activates the aryl acid substrates, and loads them onto the thiolation (T) domain (Probable). The thioesterase (TE) domain shares the missing condensation (C) domain function, and is responsible for condensation and final product release (Probable).</text>
</comment>
<comment type="similarity">
    <text evidence="8">Belongs to the NRP synthetase family.</text>
</comment>
<comment type="sequence caution" evidence="8">
    <conflict type="erroneous gene model prediction">
        <sequence resource="EMBL-CDS" id="EAU36089"/>
    </conflict>
</comment>
<sequence>MTKIDLINLLDHAADTVAASGILIYSPGNVESPHRLTYAELRDAAQQNARRLGCMEGFAPGSLVLLHLDGYRDNMIWLWSLIYAGCIPVMSTPFAHHEEHRRSHLLHLQSLLRDPICLTRQGLEAQFPPDVGFRLCNIESISGGSNPFTSPRLGQPPGQDDNVDDIALLMLTSGSTGHAKAVPLTHSQLLSALAGKERFLQLRQHGPSLNWVAFDHIASLAEMHFHPIFACIDQVHVAAADVITDPLILLELIHRHRVGITFAPNFLLAKLLDSLEREPSPSSRPWDLSCLMHLLSGGEANVVDTCARLARRLTQDYGVPSTCIKPAFGMTETCAGCSFNDRFPTYETVHMLDFASLGRGVKGVQMRVTSLSTGQPVDDHSEVGNLELSGPSVFRGYYNNSQATRDSFTPDGWFRTGDLAMIDAGGQLVLRGRSKELICINGAKYLPHEVESAIEDAKVRGVTPGFTICFGYRPAKAQTESLAVVYLPAYEEADVESRSQAQNAIIRVGLIMTGTRPYVLPLDAHTLVKSSLGKISRNKIKTGLESGAFQAFEETNNRLLKLRQSTPVVPAGNETETLLLAAALHVFRVTADEFGVETPMFAFGITSLDMIAWKRQAETILGHEIPMLAIITSPTIRVLARQLQDGHHGPGEYNPVVTLQPHGSKTPLWLIHPIGGEVLVFVSLAGLFADDRPVHALRARGLNRGEPPFGSIHEAADAYYQAIKRVQPHGPYAVAGYSYGSLVAFEVAKRLDQHGKDEVPFFGSLDLPPFHAQIISKSDWTESLLHLASSLSLIAEEEINTLGADLRGLPQPRAIQKILARAPPRRIRELDLSPDGLMRWTKLTSAMAQATRGYVPVGQTRSVDVFYTEPSGALATTRDEWLDRHREWRQFGRLETQFHPLEGLHYRLMDEDNVHKVYRVLSRAMDARGL</sequence>
<gene>
    <name evidence="7" type="primary">btyA</name>
    <name type="ORF">ATEG_02815</name>
</gene>
<dbReference type="EC" id="2.3.1.-" evidence="5"/>
<dbReference type="EMBL" id="MG384314">
    <property type="protein sequence ID" value="AUO29224.1"/>
    <property type="molecule type" value="mRNA"/>
</dbReference>
<dbReference type="EMBL" id="CH476597">
    <property type="protein sequence ID" value="EAU36089.1"/>
    <property type="status" value="ALT_SEQ"/>
    <property type="molecule type" value="Genomic_DNA"/>
</dbReference>
<dbReference type="RefSeq" id="XP_001211993.1">
    <property type="nucleotide sequence ID" value="XM_001211993.1"/>
</dbReference>
<dbReference type="SMR" id="Q0CU19"/>
<dbReference type="STRING" id="341663.Q0CU19"/>
<dbReference type="ESTHER" id="asptn-btya">
    <property type="family name" value="Thioesterase"/>
</dbReference>
<dbReference type="EnsemblFungi" id="EAU36089">
    <property type="protein sequence ID" value="EAU36089"/>
    <property type="gene ID" value="ATEG_02815"/>
</dbReference>
<dbReference type="GeneID" id="4317761"/>
<dbReference type="eggNOG" id="KOG1176">
    <property type="taxonomic scope" value="Eukaryota"/>
</dbReference>
<dbReference type="eggNOG" id="KOG1202">
    <property type="taxonomic scope" value="Eukaryota"/>
</dbReference>
<dbReference type="HOGENOM" id="CLU_000022_23_6_1"/>
<dbReference type="OrthoDB" id="10253869at2759"/>
<dbReference type="Proteomes" id="UP000007963">
    <property type="component" value="Unassembled WGS sequence"/>
</dbReference>
<dbReference type="GO" id="GO:0031177">
    <property type="term" value="F:phosphopantetheine binding"/>
    <property type="evidence" value="ECO:0007669"/>
    <property type="project" value="InterPro"/>
</dbReference>
<dbReference type="GO" id="GO:0016740">
    <property type="term" value="F:transferase activity"/>
    <property type="evidence" value="ECO:0007669"/>
    <property type="project" value="UniProtKB-KW"/>
</dbReference>
<dbReference type="GO" id="GO:0031957">
    <property type="term" value="F:very long-chain fatty acid-CoA ligase activity"/>
    <property type="evidence" value="ECO:0007669"/>
    <property type="project" value="TreeGrafter"/>
</dbReference>
<dbReference type="GO" id="GO:0006633">
    <property type="term" value="P:fatty acid biosynthetic process"/>
    <property type="evidence" value="ECO:0007669"/>
    <property type="project" value="TreeGrafter"/>
</dbReference>
<dbReference type="Gene3D" id="3.30.300.30">
    <property type="match status" value="1"/>
</dbReference>
<dbReference type="Gene3D" id="1.10.1200.10">
    <property type="entry name" value="ACP-like"/>
    <property type="match status" value="1"/>
</dbReference>
<dbReference type="Gene3D" id="3.40.50.1820">
    <property type="entry name" value="alpha/beta hydrolase"/>
    <property type="match status" value="1"/>
</dbReference>
<dbReference type="Gene3D" id="3.40.50.12780">
    <property type="entry name" value="N-terminal domain of ligase-like"/>
    <property type="match status" value="1"/>
</dbReference>
<dbReference type="InterPro" id="IPR029058">
    <property type="entry name" value="AB_hydrolase_fold"/>
</dbReference>
<dbReference type="InterPro" id="IPR036736">
    <property type="entry name" value="ACP-like_sf"/>
</dbReference>
<dbReference type="InterPro" id="IPR045851">
    <property type="entry name" value="AMP-bd_C_sf"/>
</dbReference>
<dbReference type="InterPro" id="IPR020845">
    <property type="entry name" value="AMP-binding_CS"/>
</dbReference>
<dbReference type="InterPro" id="IPR000873">
    <property type="entry name" value="AMP-dep_synth/lig_dom"/>
</dbReference>
<dbReference type="InterPro" id="IPR042099">
    <property type="entry name" value="ANL_N_sf"/>
</dbReference>
<dbReference type="InterPro" id="IPR020806">
    <property type="entry name" value="PKS_PP-bd"/>
</dbReference>
<dbReference type="InterPro" id="IPR009081">
    <property type="entry name" value="PP-bd_ACP"/>
</dbReference>
<dbReference type="InterPro" id="IPR001031">
    <property type="entry name" value="Thioesterase"/>
</dbReference>
<dbReference type="PANTHER" id="PTHR24096">
    <property type="entry name" value="LONG-CHAIN-FATTY-ACID--COA LIGASE"/>
    <property type="match status" value="1"/>
</dbReference>
<dbReference type="PANTHER" id="PTHR24096:SF267">
    <property type="entry name" value="MALONATE--COA LIGASE ACSF3, MITOCHONDRIAL"/>
    <property type="match status" value="1"/>
</dbReference>
<dbReference type="Pfam" id="PF00501">
    <property type="entry name" value="AMP-binding"/>
    <property type="match status" value="1"/>
</dbReference>
<dbReference type="Pfam" id="PF00550">
    <property type="entry name" value="PP-binding"/>
    <property type="match status" value="1"/>
</dbReference>
<dbReference type="Pfam" id="PF00975">
    <property type="entry name" value="Thioesterase"/>
    <property type="match status" value="1"/>
</dbReference>
<dbReference type="SMART" id="SM00823">
    <property type="entry name" value="PKS_PP"/>
    <property type="match status" value="1"/>
</dbReference>
<dbReference type="SUPFAM" id="SSF56801">
    <property type="entry name" value="Acetyl-CoA synthetase-like"/>
    <property type="match status" value="1"/>
</dbReference>
<dbReference type="SUPFAM" id="SSF47336">
    <property type="entry name" value="ACP-like"/>
    <property type="match status" value="1"/>
</dbReference>
<dbReference type="SUPFAM" id="SSF53474">
    <property type="entry name" value="alpha/beta-Hydrolases"/>
    <property type="match status" value="1"/>
</dbReference>
<dbReference type="PROSITE" id="PS00455">
    <property type="entry name" value="AMP_BINDING"/>
    <property type="match status" value="1"/>
</dbReference>
<dbReference type="PROSITE" id="PS50075">
    <property type="entry name" value="CARRIER"/>
    <property type="match status" value="1"/>
</dbReference>
<keyword id="KW-0596">Phosphopantetheine</keyword>
<keyword id="KW-0597">Phosphoprotein</keyword>
<keyword id="KW-1185">Reference proteome</keyword>
<keyword id="KW-0808">Transferase</keyword>
<organism>
    <name type="scientific">Aspergillus terreus (strain NIH 2624 / FGSC A1156)</name>
    <dbReference type="NCBI Taxonomy" id="341663"/>
    <lineage>
        <taxon>Eukaryota</taxon>
        <taxon>Fungi</taxon>
        <taxon>Dikarya</taxon>
        <taxon>Ascomycota</taxon>
        <taxon>Pezizomycotina</taxon>
        <taxon>Eurotiomycetes</taxon>
        <taxon>Eurotiomycetidae</taxon>
        <taxon>Eurotiales</taxon>
        <taxon>Aspergillaceae</taxon>
        <taxon>Aspergillus</taxon>
        <taxon>Aspergillus subgen. Circumdati</taxon>
    </lineage>
</organism>
<name>BTYA_ASPTN</name>
<protein>
    <recommendedName>
        <fullName evidence="6">Nonribosomal peptide synthetase btyA</fullName>
        <ecNumber evidence="5">2.3.1.-</ecNumber>
    </recommendedName>
    <alternativeName>
        <fullName evidence="6">Butyrolactone IIa synthetase</fullName>
    </alternativeName>
</protein>
<reference key="1">
    <citation type="journal article" date="2018" name="Appl. Microbiol. Biotechnol.">
        <title>Production of alpha-keto carboxylic acid dimers in yeast by overexpression of NRPS-like genes from Aspergillus terreus.</title>
        <authorList>
            <person name="Huehner E."/>
            <person name="Backhaus K."/>
            <person name="Kraut R."/>
            <person name="Li S.M."/>
        </authorList>
    </citation>
    <scope>NUCLEOTIDE SEQUENCE [MRNA]</scope>
    <scope>DOMAIN</scope>
    <scope>FUNCTION</scope>
    <scope>CATALYTIC ACTIVITY</scope>
    <scope>PATHWAY</scope>
    <source>
        <strain>NIH 2624 / FGSC A1156</strain>
    </source>
</reference>
<reference key="2">
    <citation type="submission" date="2005-09" db="EMBL/GenBank/DDBJ databases">
        <title>Annotation of the Aspergillus terreus NIH2624 genome.</title>
        <authorList>
            <person name="Birren B.W."/>
            <person name="Lander E.S."/>
            <person name="Galagan J.E."/>
            <person name="Nusbaum C."/>
            <person name="Devon K."/>
            <person name="Henn M."/>
            <person name="Ma L.-J."/>
            <person name="Jaffe D.B."/>
            <person name="Butler J."/>
            <person name="Alvarez P."/>
            <person name="Gnerre S."/>
            <person name="Grabherr M."/>
            <person name="Kleber M."/>
            <person name="Mauceli E.W."/>
            <person name="Brockman W."/>
            <person name="Rounsley S."/>
            <person name="Young S.K."/>
            <person name="LaButti K."/>
            <person name="Pushparaj V."/>
            <person name="DeCaprio D."/>
            <person name="Crawford M."/>
            <person name="Koehrsen M."/>
            <person name="Engels R."/>
            <person name="Montgomery P."/>
            <person name="Pearson M."/>
            <person name="Howarth C."/>
            <person name="Larson L."/>
            <person name="Luoma S."/>
            <person name="White J."/>
            <person name="Alvarado L."/>
            <person name="Kodira C.D."/>
            <person name="Zeng Q."/>
            <person name="Oleary S."/>
            <person name="Yandava C."/>
            <person name="Denning D.W."/>
            <person name="Nierman W.C."/>
            <person name="Milne T."/>
            <person name="Madden K."/>
        </authorList>
    </citation>
    <scope>NUCLEOTIDE SEQUENCE [LARGE SCALE GENOMIC DNA]</scope>
    <source>
        <strain>NIH 2624 / FGSC A1156</strain>
    </source>
</reference>
<reference key="3">
    <citation type="journal article" date="2013" name="Org. Lett.">
        <title>Application of an efficient gene targeting system linking secondary metabolites to their biosynthetic genes in Aspergillus terreus.</title>
        <authorList>
            <person name="Guo C.J."/>
            <person name="Knox B.P."/>
            <person name="Sanchez J.F."/>
            <person name="Chiang Y.M."/>
            <person name="Bruno K.S."/>
            <person name="Wang C.C."/>
        </authorList>
    </citation>
    <scope>IDENTIFICATION</scope>
    <scope>DOMAIN</scope>
    <scope>FUNCTION</scope>
    <scope>PATHWAY</scope>
</reference>
<reference key="4">
    <citation type="journal article" date="2016" name="Org. Lett.">
        <title>Engineering fungal nonribosomal peptide synthetase-like enzymes by heterologous expression and domain swapping.</title>
        <authorList>
            <person name="van Dijk J.W."/>
            <person name="Guo C.J."/>
            <person name="Wang C.C."/>
        </authorList>
    </citation>
    <scope>DOMAIN</scope>
    <scope>FUNCTION</scope>
    <scope>CATALYTIC ACTIVITY</scope>
    <scope>PATHWAY</scope>
</reference>